<comment type="function">
    <text evidence="1">Cell wall formation.</text>
</comment>
<comment type="catalytic activity">
    <reaction evidence="1">
        <text>UDP-N-acetyl-alpha-D-muramate + L-alanine + ATP = UDP-N-acetyl-alpha-D-muramoyl-L-alanine + ADP + phosphate + H(+)</text>
        <dbReference type="Rhea" id="RHEA:23372"/>
        <dbReference type="ChEBI" id="CHEBI:15378"/>
        <dbReference type="ChEBI" id="CHEBI:30616"/>
        <dbReference type="ChEBI" id="CHEBI:43474"/>
        <dbReference type="ChEBI" id="CHEBI:57972"/>
        <dbReference type="ChEBI" id="CHEBI:70757"/>
        <dbReference type="ChEBI" id="CHEBI:83898"/>
        <dbReference type="ChEBI" id="CHEBI:456216"/>
        <dbReference type="EC" id="6.3.2.8"/>
    </reaction>
</comment>
<comment type="pathway">
    <text evidence="1">Cell wall biogenesis; peptidoglycan biosynthesis.</text>
</comment>
<comment type="subcellular location">
    <subcellularLocation>
        <location evidence="1">Cytoplasm</location>
    </subcellularLocation>
</comment>
<comment type="similarity">
    <text evidence="1">Belongs to the MurCDEF family.</text>
</comment>
<comment type="sequence caution" evidence="2">
    <conflict type="erroneous initiation">
        <sequence resource="EMBL-CDS" id="AAF14862"/>
    </conflict>
</comment>
<comment type="sequence caution" evidence="2">
    <conflict type="erroneous initiation">
        <sequence resource="EMBL-CDS" id="AAG48251"/>
    </conflict>
</comment>
<feature type="chain" id="PRO_0000182135" description="UDP-N-acetylmuramate--L-alanine ligase">
    <location>
        <begin position="1"/>
        <end position="480"/>
    </location>
</feature>
<feature type="binding site" evidence="1">
    <location>
        <begin position="122"/>
        <end position="128"/>
    </location>
    <ligand>
        <name>ATP</name>
        <dbReference type="ChEBI" id="CHEBI:30616"/>
    </ligand>
</feature>
<feature type="strand" evidence="5">
    <location>
        <begin position="16"/>
        <end position="22"/>
    </location>
</feature>
<feature type="helix" evidence="5">
    <location>
        <begin position="26"/>
        <end position="37"/>
    </location>
</feature>
<feature type="strand" evidence="5">
    <location>
        <begin position="41"/>
        <end position="48"/>
    </location>
</feature>
<feature type="helix" evidence="5">
    <location>
        <begin position="51"/>
        <end position="59"/>
    </location>
</feature>
<feature type="strand" evidence="5">
    <location>
        <begin position="62"/>
        <end position="66"/>
    </location>
</feature>
<feature type="helix" evidence="5">
    <location>
        <begin position="69"/>
        <end position="72"/>
    </location>
</feature>
<feature type="strand" evidence="5">
    <location>
        <begin position="76"/>
        <end position="83"/>
    </location>
</feature>
<feature type="helix" evidence="5">
    <location>
        <begin position="89"/>
        <end position="96"/>
    </location>
</feature>
<feature type="strand" evidence="5">
    <location>
        <begin position="101"/>
        <end position="103"/>
    </location>
</feature>
<feature type="helix" evidence="5">
    <location>
        <begin position="104"/>
        <end position="110"/>
    </location>
</feature>
<feature type="helix" evidence="5">
    <location>
        <begin position="111"/>
        <end position="114"/>
    </location>
</feature>
<feature type="strand" evidence="5">
    <location>
        <begin position="115"/>
        <end position="125"/>
    </location>
</feature>
<feature type="helix" evidence="5">
    <location>
        <begin position="126"/>
        <end position="139"/>
    </location>
</feature>
<feature type="strand" evidence="5">
    <location>
        <begin position="145"/>
        <end position="148"/>
    </location>
</feature>
<feature type="strand" evidence="5">
    <location>
        <begin position="151"/>
        <end position="156"/>
    </location>
</feature>
<feature type="strand" evidence="3">
    <location>
        <begin position="157"/>
        <end position="159"/>
    </location>
</feature>
<feature type="strand" evidence="5">
    <location>
        <begin position="164"/>
        <end position="170"/>
    </location>
</feature>
<feature type="helix" evidence="5">
    <location>
        <begin position="178"/>
        <end position="180"/>
    </location>
</feature>
<feature type="strand" evidence="5">
    <location>
        <begin position="184"/>
        <end position="188"/>
    </location>
</feature>
<feature type="helix" evidence="4">
    <location>
        <begin position="196"/>
        <end position="199"/>
    </location>
</feature>
<feature type="helix" evidence="5">
    <location>
        <begin position="203"/>
        <end position="214"/>
    </location>
</feature>
<feature type="strand" evidence="5">
    <location>
        <begin position="221"/>
        <end position="226"/>
    </location>
</feature>
<feature type="helix" evidence="5">
    <location>
        <begin position="230"/>
        <end position="235"/>
    </location>
</feature>
<feature type="helix" evidence="5">
    <location>
        <begin position="236"/>
        <end position="238"/>
    </location>
</feature>
<feature type="strand" evidence="5">
    <location>
        <begin position="243"/>
        <end position="249"/>
    </location>
</feature>
<feature type="strand" evidence="5">
    <location>
        <begin position="253"/>
        <end position="262"/>
    </location>
</feature>
<feature type="strand" evidence="5">
    <location>
        <begin position="265"/>
        <end position="271"/>
    </location>
</feature>
<feature type="strand" evidence="5">
    <location>
        <begin position="278"/>
        <end position="284"/>
    </location>
</feature>
<feature type="helix" evidence="5">
    <location>
        <begin position="287"/>
        <end position="302"/>
    </location>
</feature>
<feature type="helix" evidence="5">
    <location>
        <begin position="307"/>
        <end position="316"/>
    </location>
</feature>
<reference key="1">
    <citation type="journal article" date="2000" name="FEMS Microbiol. Lett.">
        <title>Cloning, over-expression and purification of Pseudomonas aeruginosa murC encoding uridine diphosphate N-acetylmuramate: L-alanine ligase.</title>
        <authorList>
            <person name="El Zoeiby A."/>
            <person name="Sanschagrin F."/>
            <person name="Lamoureux J."/>
            <person name="Darveau A."/>
            <person name="Levesque R.C."/>
        </authorList>
    </citation>
    <scope>NUCLEOTIDE SEQUENCE [GENOMIC DNA]</scope>
    <source>
        <strain>PAO1293</strain>
    </source>
</reference>
<reference key="2">
    <citation type="submission" date="2000-09" db="EMBL/GenBank/DDBJ databases">
        <title>Pseudomonas aeruginosa murC gene encoding UDP-N-acetylmuramyl:L-alanine ligase.</title>
        <authorList>
            <person name="El-Sherbeini M."/>
            <person name="Azzolina B."/>
        </authorList>
    </citation>
    <scope>NUCLEOTIDE SEQUENCE [GENOMIC DNA]</scope>
</reference>
<reference key="3">
    <citation type="journal article" date="2000" name="Nature">
        <title>Complete genome sequence of Pseudomonas aeruginosa PAO1, an opportunistic pathogen.</title>
        <authorList>
            <person name="Stover C.K."/>
            <person name="Pham X.-Q.T."/>
            <person name="Erwin A.L."/>
            <person name="Mizoguchi S.D."/>
            <person name="Warrener P."/>
            <person name="Hickey M.J."/>
            <person name="Brinkman F.S.L."/>
            <person name="Hufnagle W.O."/>
            <person name="Kowalik D.J."/>
            <person name="Lagrou M."/>
            <person name="Garber R.L."/>
            <person name="Goltry L."/>
            <person name="Tolentino E."/>
            <person name="Westbrock-Wadman S."/>
            <person name="Yuan Y."/>
            <person name="Brody L.L."/>
            <person name="Coulter S.N."/>
            <person name="Folger K.R."/>
            <person name="Kas A."/>
            <person name="Larbig K."/>
            <person name="Lim R.M."/>
            <person name="Smith K.A."/>
            <person name="Spencer D.H."/>
            <person name="Wong G.K.-S."/>
            <person name="Wu Z."/>
            <person name="Paulsen I.T."/>
            <person name="Reizer J."/>
            <person name="Saier M.H. Jr."/>
            <person name="Hancock R.E.W."/>
            <person name="Lory S."/>
            <person name="Olson M.V."/>
        </authorList>
    </citation>
    <scope>NUCLEOTIDE SEQUENCE [LARGE SCALE GENOMIC DNA]</scope>
    <source>
        <strain>ATCC 15692 / DSM 22644 / CIP 104116 / JCM 14847 / LMG 12228 / 1C / PRS 101 / PAO1</strain>
    </source>
</reference>
<accession>Q9HW02</accession>
<accession>Q9RGR6</accession>
<gene>
    <name evidence="1" type="primary">murC</name>
    <name type="ordered locus">PA4411</name>
</gene>
<sequence>MVKEPNGVTRTMRRIRRIHFVGIGGAGMCGIAEVLLNLGYEVSGSDLKASAVTERLEKFGAQIFIGHQAENADGADVLVVSSAINRANPEVASALERRIPVVPRAEMLAELMRYRHGIAVAGTHGKTTTTSLIASVFAAGGLDPTFVIGGRLNAAGTNAQLGASRYLVAEADESDASFLHLQPMVAVVTNIDADHMATYGGDFNKLKKTFVEFLHNLPFYGLAVMCVDDPVVREILPQIARPTVTYGLSEDADVRAINIRQEGMRTWFTVLRPEREPLDVSVNMPGLHNVLNSLATIVIATDEGISDEAIVQGLSGFQGVGRRFQVYGELQVEGGSVMLVDDYGHHPREVAAVIKAIRGGWPERRLVMVYQPHRYTRTRDLYEDFVQVLGEANVLLLMEVYPAGEEPIPGADSRQLCHSIRQRGQLDPIYFERDADLAPLVKPLLRAGDILLCQGAGDVGGLAPQLIKNPLFAGKGGKGA</sequence>
<proteinExistence type="evidence at protein level"/>
<name>MURC_PSEAE</name>
<evidence type="ECO:0000255" key="1">
    <source>
        <dbReference type="HAMAP-Rule" id="MF_00046"/>
    </source>
</evidence>
<evidence type="ECO:0000305" key="2"/>
<evidence type="ECO:0007829" key="3">
    <source>
        <dbReference type="PDB" id="6X9F"/>
    </source>
</evidence>
<evidence type="ECO:0007829" key="4">
    <source>
        <dbReference type="PDB" id="8EGM"/>
    </source>
</evidence>
<evidence type="ECO:0007829" key="5">
    <source>
        <dbReference type="PDB" id="8EWA"/>
    </source>
</evidence>
<organism>
    <name type="scientific">Pseudomonas aeruginosa (strain ATCC 15692 / DSM 22644 / CIP 104116 / JCM 14847 / LMG 12228 / 1C / PRS 101 / PAO1)</name>
    <dbReference type="NCBI Taxonomy" id="208964"/>
    <lineage>
        <taxon>Bacteria</taxon>
        <taxon>Pseudomonadati</taxon>
        <taxon>Pseudomonadota</taxon>
        <taxon>Gammaproteobacteria</taxon>
        <taxon>Pseudomonadales</taxon>
        <taxon>Pseudomonadaceae</taxon>
        <taxon>Pseudomonas</taxon>
    </lineage>
</organism>
<keyword id="KW-0002">3D-structure</keyword>
<keyword id="KW-0067">ATP-binding</keyword>
<keyword id="KW-0131">Cell cycle</keyword>
<keyword id="KW-0132">Cell division</keyword>
<keyword id="KW-0133">Cell shape</keyword>
<keyword id="KW-0961">Cell wall biogenesis/degradation</keyword>
<keyword id="KW-0963">Cytoplasm</keyword>
<keyword id="KW-0436">Ligase</keyword>
<keyword id="KW-0547">Nucleotide-binding</keyword>
<keyword id="KW-0573">Peptidoglycan synthesis</keyword>
<keyword id="KW-1185">Reference proteome</keyword>
<protein>
    <recommendedName>
        <fullName evidence="1">UDP-N-acetylmuramate--L-alanine ligase</fullName>
        <ecNumber evidence="1">6.3.2.8</ecNumber>
    </recommendedName>
    <alternativeName>
        <fullName evidence="1">UDP-N-acetylmuramoyl-L-alanine synthetase</fullName>
    </alternativeName>
</protein>
<dbReference type="EC" id="6.3.2.8" evidence="1"/>
<dbReference type="EMBL" id="AF110740">
    <property type="protein sequence ID" value="AAF14862.1"/>
    <property type="status" value="ALT_INIT"/>
    <property type="molecule type" value="Genomic_DNA"/>
</dbReference>
<dbReference type="EMBL" id="AF306766">
    <property type="protein sequence ID" value="AAG48251.1"/>
    <property type="status" value="ALT_INIT"/>
    <property type="molecule type" value="Genomic_DNA"/>
</dbReference>
<dbReference type="EMBL" id="AE004091">
    <property type="protein sequence ID" value="AAG07799.1"/>
    <property type="molecule type" value="Genomic_DNA"/>
</dbReference>
<dbReference type="PIR" id="D83094">
    <property type="entry name" value="D83094"/>
</dbReference>
<dbReference type="RefSeq" id="NP_253101.1">
    <property type="nucleotide sequence ID" value="NC_002516.2"/>
</dbReference>
<dbReference type="RefSeq" id="WP_003094121.1">
    <property type="nucleotide sequence ID" value="NZ_QZGE01000004.1"/>
</dbReference>
<dbReference type="PDB" id="5VVW">
    <property type="method" value="X-ray"/>
    <property type="resolution" value="2.30 A"/>
    <property type="chains" value="A/B/C/D/E/F/G/H=16-322"/>
</dbReference>
<dbReference type="PDB" id="6X9F">
    <property type="method" value="X-ray"/>
    <property type="resolution" value="2.35 A"/>
    <property type="chains" value="A/B/C/D/E/F/G/H=16-480"/>
</dbReference>
<dbReference type="PDB" id="6X9N">
    <property type="method" value="X-ray"/>
    <property type="resolution" value="2.25 A"/>
    <property type="chains" value="A/B/C/D/E/F/G/H=16-480"/>
</dbReference>
<dbReference type="PDB" id="8DOF">
    <property type="method" value="X-ray"/>
    <property type="resolution" value="2.60 A"/>
    <property type="chains" value="A=1-480"/>
</dbReference>
<dbReference type="PDB" id="8EGM">
    <property type="method" value="X-ray"/>
    <property type="resolution" value="2.20 A"/>
    <property type="chains" value="A/B/C/D/E/F/G/H=16-322"/>
</dbReference>
<dbReference type="PDB" id="8EGN">
    <property type="method" value="X-ray"/>
    <property type="resolution" value="1.95 A"/>
    <property type="chains" value="A/B=16-322"/>
</dbReference>
<dbReference type="PDB" id="8EWA">
    <property type="method" value="X-ray"/>
    <property type="resolution" value="1.85 A"/>
    <property type="chains" value="A/B=16-322"/>
</dbReference>
<dbReference type="PDB" id="9D9K">
    <property type="method" value="X-ray"/>
    <property type="resolution" value="2.63 A"/>
    <property type="chains" value="A=16-322"/>
</dbReference>
<dbReference type="PDB" id="9D9M">
    <property type="method" value="X-ray"/>
    <property type="resolution" value="2.32 A"/>
    <property type="chains" value="A=16-322"/>
</dbReference>
<dbReference type="PDBsum" id="5VVW"/>
<dbReference type="PDBsum" id="6X9F"/>
<dbReference type="PDBsum" id="6X9N"/>
<dbReference type="PDBsum" id="8DOF"/>
<dbReference type="PDBsum" id="8EGM"/>
<dbReference type="PDBsum" id="8EGN"/>
<dbReference type="PDBsum" id="8EWA"/>
<dbReference type="PDBsum" id="9D9K"/>
<dbReference type="PDBsum" id="9D9M"/>
<dbReference type="SMR" id="Q9HW02"/>
<dbReference type="FunCoup" id="Q9HW02">
    <property type="interactions" value="367"/>
</dbReference>
<dbReference type="STRING" id="208964.PA4411"/>
<dbReference type="BindingDB" id="Q9HW02"/>
<dbReference type="PaxDb" id="208964-PA4411"/>
<dbReference type="GeneID" id="881283"/>
<dbReference type="KEGG" id="pae:PA4411"/>
<dbReference type="PATRIC" id="fig|208964.12.peg.4620"/>
<dbReference type="PseudoCAP" id="PA4411"/>
<dbReference type="HOGENOM" id="CLU_028104_2_2_6"/>
<dbReference type="InParanoid" id="Q9HW02"/>
<dbReference type="OrthoDB" id="9804126at2"/>
<dbReference type="PhylomeDB" id="Q9HW02"/>
<dbReference type="BioCyc" id="PAER208964:G1FZ6-4498-MONOMER"/>
<dbReference type="UniPathway" id="UPA00219"/>
<dbReference type="Proteomes" id="UP000002438">
    <property type="component" value="Chromosome"/>
</dbReference>
<dbReference type="GO" id="GO:0005737">
    <property type="term" value="C:cytoplasm"/>
    <property type="evidence" value="ECO:0007669"/>
    <property type="project" value="UniProtKB-SubCell"/>
</dbReference>
<dbReference type="GO" id="GO:0005524">
    <property type="term" value="F:ATP binding"/>
    <property type="evidence" value="ECO:0007669"/>
    <property type="project" value="UniProtKB-UniRule"/>
</dbReference>
<dbReference type="GO" id="GO:0008763">
    <property type="term" value="F:UDP-N-acetylmuramate-L-alanine ligase activity"/>
    <property type="evidence" value="ECO:0007669"/>
    <property type="project" value="UniProtKB-UniRule"/>
</dbReference>
<dbReference type="GO" id="GO:0051301">
    <property type="term" value="P:cell division"/>
    <property type="evidence" value="ECO:0007669"/>
    <property type="project" value="UniProtKB-KW"/>
</dbReference>
<dbReference type="GO" id="GO:0071555">
    <property type="term" value="P:cell wall organization"/>
    <property type="evidence" value="ECO:0007669"/>
    <property type="project" value="UniProtKB-KW"/>
</dbReference>
<dbReference type="GO" id="GO:0009252">
    <property type="term" value="P:peptidoglycan biosynthetic process"/>
    <property type="evidence" value="ECO:0007669"/>
    <property type="project" value="UniProtKB-UniRule"/>
</dbReference>
<dbReference type="GO" id="GO:0008360">
    <property type="term" value="P:regulation of cell shape"/>
    <property type="evidence" value="ECO:0007669"/>
    <property type="project" value="UniProtKB-KW"/>
</dbReference>
<dbReference type="FunFam" id="3.40.1190.10:FF:000001">
    <property type="entry name" value="UDP-N-acetylmuramate--L-alanine ligase"/>
    <property type="match status" value="1"/>
</dbReference>
<dbReference type="Gene3D" id="3.90.190.20">
    <property type="entry name" value="Mur ligase, C-terminal domain"/>
    <property type="match status" value="1"/>
</dbReference>
<dbReference type="Gene3D" id="3.40.1190.10">
    <property type="entry name" value="Mur-like, catalytic domain"/>
    <property type="match status" value="1"/>
</dbReference>
<dbReference type="Gene3D" id="3.40.50.720">
    <property type="entry name" value="NAD(P)-binding Rossmann-like Domain"/>
    <property type="match status" value="1"/>
</dbReference>
<dbReference type="HAMAP" id="MF_00046">
    <property type="entry name" value="MurC"/>
    <property type="match status" value="1"/>
</dbReference>
<dbReference type="InterPro" id="IPR036565">
    <property type="entry name" value="Mur-like_cat_sf"/>
</dbReference>
<dbReference type="InterPro" id="IPR004101">
    <property type="entry name" value="Mur_ligase_C"/>
</dbReference>
<dbReference type="InterPro" id="IPR036615">
    <property type="entry name" value="Mur_ligase_C_dom_sf"/>
</dbReference>
<dbReference type="InterPro" id="IPR013221">
    <property type="entry name" value="Mur_ligase_cen"/>
</dbReference>
<dbReference type="InterPro" id="IPR000713">
    <property type="entry name" value="Mur_ligase_N"/>
</dbReference>
<dbReference type="InterPro" id="IPR050061">
    <property type="entry name" value="MurCDEF_pg_biosynth"/>
</dbReference>
<dbReference type="InterPro" id="IPR005758">
    <property type="entry name" value="UDP-N-AcMur_Ala_ligase_MurC"/>
</dbReference>
<dbReference type="NCBIfam" id="TIGR01082">
    <property type="entry name" value="murC"/>
    <property type="match status" value="1"/>
</dbReference>
<dbReference type="PANTHER" id="PTHR43445:SF3">
    <property type="entry name" value="UDP-N-ACETYLMURAMATE--L-ALANINE LIGASE"/>
    <property type="match status" value="1"/>
</dbReference>
<dbReference type="PANTHER" id="PTHR43445">
    <property type="entry name" value="UDP-N-ACETYLMURAMATE--L-ALANINE LIGASE-RELATED"/>
    <property type="match status" value="1"/>
</dbReference>
<dbReference type="Pfam" id="PF01225">
    <property type="entry name" value="Mur_ligase"/>
    <property type="match status" value="1"/>
</dbReference>
<dbReference type="Pfam" id="PF02875">
    <property type="entry name" value="Mur_ligase_C"/>
    <property type="match status" value="1"/>
</dbReference>
<dbReference type="Pfam" id="PF08245">
    <property type="entry name" value="Mur_ligase_M"/>
    <property type="match status" value="1"/>
</dbReference>
<dbReference type="SUPFAM" id="SSF51984">
    <property type="entry name" value="MurCD N-terminal domain"/>
    <property type="match status" value="1"/>
</dbReference>
<dbReference type="SUPFAM" id="SSF53623">
    <property type="entry name" value="MurD-like peptide ligases, catalytic domain"/>
    <property type="match status" value="1"/>
</dbReference>
<dbReference type="SUPFAM" id="SSF53244">
    <property type="entry name" value="MurD-like peptide ligases, peptide-binding domain"/>
    <property type="match status" value="1"/>
</dbReference>